<proteinExistence type="inferred from homology"/>
<accession>A9BCN5</accession>
<sequence length="179" mass="19947">MSLKHRYRETIRPKLLKDLGLSNIHQVPKVVKVNVNRGLGEAAQNSKTLEASLSEMATITGQKALVTRAKKAIAGFKIREGMPIGCTVTLRGERMYAFLERLINLALPRIRDFRGVSPKSFDGRGNYTLGVKEQLIFPEISFDKIDTIRGMDITIVTSARSDEEGRALLKALGFPFRST</sequence>
<gene>
    <name evidence="1" type="primary">rplE</name>
    <name evidence="1" type="synonym">rpl5</name>
    <name type="ordered locus">P9211_16661</name>
</gene>
<protein>
    <recommendedName>
        <fullName evidence="1">Large ribosomal subunit protein uL5</fullName>
    </recommendedName>
    <alternativeName>
        <fullName evidence="2">50S ribosomal protein L5</fullName>
    </alternativeName>
</protein>
<dbReference type="EMBL" id="CP000878">
    <property type="protein sequence ID" value="ABX09597.1"/>
    <property type="molecule type" value="Genomic_DNA"/>
</dbReference>
<dbReference type="RefSeq" id="WP_012196217.1">
    <property type="nucleotide sequence ID" value="NC_009976.1"/>
</dbReference>
<dbReference type="SMR" id="A9BCN5"/>
<dbReference type="STRING" id="93059.P9211_16661"/>
<dbReference type="KEGG" id="pmj:P9211_16661"/>
<dbReference type="eggNOG" id="COG0094">
    <property type="taxonomic scope" value="Bacteria"/>
</dbReference>
<dbReference type="HOGENOM" id="CLU_061015_2_1_3"/>
<dbReference type="OrthoDB" id="9806626at2"/>
<dbReference type="Proteomes" id="UP000000788">
    <property type="component" value="Chromosome"/>
</dbReference>
<dbReference type="GO" id="GO:1990904">
    <property type="term" value="C:ribonucleoprotein complex"/>
    <property type="evidence" value="ECO:0007669"/>
    <property type="project" value="UniProtKB-KW"/>
</dbReference>
<dbReference type="GO" id="GO:0005840">
    <property type="term" value="C:ribosome"/>
    <property type="evidence" value="ECO:0007669"/>
    <property type="project" value="UniProtKB-KW"/>
</dbReference>
<dbReference type="GO" id="GO:0019843">
    <property type="term" value="F:rRNA binding"/>
    <property type="evidence" value="ECO:0007669"/>
    <property type="project" value="UniProtKB-UniRule"/>
</dbReference>
<dbReference type="GO" id="GO:0003735">
    <property type="term" value="F:structural constituent of ribosome"/>
    <property type="evidence" value="ECO:0007669"/>
    <property type="project" value="InterPro"/>
</dbReference>
<dbReference type="GO" id="GO:0000049">
    <property type="term" value="F:tRNA binding"/>
    <property type="evidence" value="ECO:0007669"/>
    <property type="project" value="UniProtKB-UniRule"/>
</dbReference>
<dbReference type="GO" id="GO:0006412">
    <property type="term" value="P:translation"/>
    <property type="evidence" value="ECO:0007669"/>
    <property type="project" value="UniProtKB-UniRule"/>
</dbReference>
<dbReference type="FunFam" id="3.30.1440.10:FF:000001">
    <property type="entry name" value="50S ribosomal protein L5"/>
    <property type="match status" value="1"/>
</dbReference>
<dbReference type="Gene3D" id="3.30.1440.10">
    <property type="match status" value="1"/>
</dbReference>
<dbReference type="HAMAP" id="MF_01333_B">
    <property type="entry name" value="Ribosomal_uL5_B"/>
    <property type="match status" value="1"/>
</dbReference>
<dbReference type="InterPro" id="IPR002132">
    <property type="entry name" value="Ribosomal_uL5"/>
</dbReference>
<dbReference type="InterPro" id="IPR020930">
    <property type="entry name" value="Ribosomal_uL5_bac-type"/>
</dbReference>
<dbReference type="InterPro" id="IPR031309">
    <property type="entry name" value="Ribosomal_uL5_C"/>
</dbReference>
<dbReference type="InterPro" id="IPR020929">
    <property type="entry name" value="Ribosomal_uL5_CS"/>
</dbReference>
<dbReference type="InterPro" id="IPR022803">
    <property type="entry name" value="Ribosomal_uL5_dom_sf"/>
</dbReference>
<dbReference type="InterPro" id="IPR031310">
    <property type="entry name" value="Ribosomal_uL5_N"/>
</dbReference>
<dbReference type="NCBIfam" id="NF000585">
    <property type="entry name" value="PRK00010.1"/>
    <property type="match status" value="1"/>
</dbReference>
<dbReference type="PANTHER" id="PTHR11994">
    <property type="entry name" value="60S RIBOSOMAL PROTEIN L11-RELATED"/>
    <property type="match status" value="1"/>
</dbReference>
<dbReference type="Pfam" id="PF00281">
    <property type="entry name" value="Ribosomal_L5"/>
    <property type="match status" value="1"/>
</dbReference>
<dbReference type="Pfam" id="PF00673">
    <property type="entry name" value="Ribosomal_L5_C"/>
    <property type="match status" value="1"/>
</dbReference>
<dbReference type="PIRSF" id="PIRSF002161">
    <property type="entry name" value="Ribosomal_L5"/>
    <property type="match status" value="1"/>
</dbReference>
<dbReference type="SUPFAM" id="SSF55282">
    <property type="entry name" value="RL5-like"/>
    <property type="match status" value="1"/>
</dbReference>
<dbReference type="PROSITE" id="PS00358">
    <property type="entry name" value="RIBOSOMAL_L5"/>
    <property type="match status" value="1"/>
</dbReference>
<name>RL5_PROM4</name>
<comment type="function">
    <text evidence="1">This is one of the proteins that bind and probably mediate the attachment of the 5S RNA into the large ribosomal subunit, where it forms part of the central protuberance. In the 70S ribosome it contacts protein S13 of the 30S subunit (bridge B1b), connecting the 2 subunits; this bridge is implicated in subunit movement. Contacts the P site tRNA; the 5S rRNA and some of its associated proteins might help stabilize positioning of ribosome-bound tRNAs.</text>
</comment>
<comment type="subunit">
    <text evidence="1">Part of the 50S ribosomal subunit; part of the 5S rRNA/L5/L18/L25 subcomplex. Contacts the 5S rRNA and the P site tRNA. Forms a bridge to the 30S subunit in the 70S ribosome.</text>
</comment>
<comment type="similarity">
    <text evidence="1">Belongs to the universal ribosomal protein uL5 family.</text>
</comment>
<reference key="1">
    <citation type="journal article" date="2007" name="PLoS Genet.">
        <title>Patterns and implications of gene gain and loss in the evolution of Prochlorococcus.</title>
        <authorList>
            <person name="Kettler G.C."/>
            <person name="Martiny A.C."/>
            <person name="Huang K."/>
            <person name="Zucker J."/>
            <person name="Coleman M.L."/>
            <person name="Rodrigue S."/>
            <person name="Chen F."/>
            <person name="Lapidus A."/>
            <person name="Ferriera S."/>
            <person name="Johnson J."/>
            <person name="Steglich C."/>
            <person name="Church G.M."/>
            <person name="Richardson P."/>
            <person name="Chisholm S.W."/>
        </authorList>
    </citation>
    <scope>NUCLEOTIDE SEQUENCE [LARGE SCALE GENOMIC DNA]</scope>
    <source>
        <strain>MIT 9211</strain>
    </source>
</reference>
<keyword id="KW-1185">Reference proteome</keyword>
<keyword id="KW-0687">Ribonucleoprotein</keyword>
<keyword id="KW-0689">Ribosomal protein</keyword>
<keyword id="KW-0694">RNA-binding</keyword>
<keyword id="KW-0699">rRNA-binding</keyword>
<keyword id="KW-0820">tRNA-binding</keyword>
<evidence type="ECO:0000255" key="1">
    <source>
        <dbReference type="HAMAP-Rule" id="MF_01333"/>
    </source>
</evidence>
<evidence type="ECO:0000305" key="2"/>
<feature type="chain" id="PRO_1000142432" description="Large ribosomal subunit protein uL5">
    <location>
        <begin position="1"/>
        <end position="179"/>
    </location>
</feature>
<organism>
    <name type="scientific">Prochlorococcus marinus (strain MIT 9211)</name>
    <dbReference type="NCBI Taxonomy" id="93059"/>
    <lineage>
        <taxon>Bacteria</taxon>
        <taxon>Bacillati</taxon>
        <taxon>Cyanobacteriota</taxon>
        <taxon>Cyanophyceae</taxon>
        <taxon>Synechococcales</taxon>
        <taxon>Prochlorococcaceae</taxon>
        <taxon>Prochlorococcus</taxon>
    </lineage>
</organism>